<dbReference type="SMR" id="C0HLF5"/>
<dbReference type="GO" id="GO:0005576">
    <property type="term" value="C:extracellular region"/>
    <property type="evidence" value="ECO:0007669"/>
    <property type="project" value="UniProtKB-SubCell"/>
</dbReference>
<dbReference type="GO" id="GO:0016020">
    <property type="term" value="C:membrane"/>
    <property type="evidence" value="ECO:0007669"/>
    <property type="project" value="UniProtKB-KW"/>
</dbReference>
<dbReference type="GO" id="GO:0044218">
    <property type="term" value="C:other organism cell membrane"/>
    <property type="evidence" value="ECO:0007669"/>
    <property type="project" value="UniProtKB-KW"/>
</dbReference>
<dbReference type="GO" id="GO:0090729">
    <property type="term" value="F:toxin activity"/>
    <property type="evidence" value="ECO:0007669"/>
    <property type="project" value="UniProtKB-KW"/>
</dbReference>
<dbReference type="GO" id="GO:0042742">
    <property type="term" value="P:defense response to bacterium"/>
    <property type="evidence" value="ECO:0007669"/>
    <property type="project" value="UniProtKB-KW"/>
</dbReference>
<dbReference type="GO" id="GO:0031640">
    <property type="term" value="P:killing of cells of another organism"/>
    <property type="evidence" value="ECO:0007669"/>
    <property type="project" value="UniProtKB-KW"/>
</dbReference>
<accession>C0HLF5</accession>
<organism>
    <name type="scientific">Oxyopes takobius</name>
    <name type="common">Lynx spider</name>
    <name type="synonym">Oxyopes foliiformis</name>
    <dbReference type="NCBI Taxonomy" id="666126"/>
    <lineage>
        <taxon>Eukaryota</taxon>
        <taxon>Metazoa</taxon>
        <taxon>Ecdysozoa</taxon>
        <taxon>Arthropoda</taxon>
        <taxon>Chelicerata</taxon>
        <taxon>Arachnida</taxon>
        <taxon>Araneae</taxon>
        <taxon>Araneomorphae</taxon>
        <taxon>Entelegynae</taxon>
        <taxon>Lycosoidea</taxon>
        <taxon>Oxyopidae</taxon>
        <taxon>Oxyopes</taxon>
    </lineage>
</organism>
<name>TOP1B_OXYTA</name>
<keyword id="KW-0044">Antibiotic</keyword>
<keyword id="KW-0929">Antimicrobial</keyword>
<keyword id="KW-0204">Cytolysis</keyword>
<keyword id="KW-0903">Direct protein sequencing</keyword>
<keyword id="KW-0354">Hemolysis</keyword>
<keyword id="KW-0472">Membrane</keyword>
<keyword id="KW-0964">Secreted</keyword>
<keyword id="KW-1052">Target cell membrane</keyword>
<keyword id="KW-1053">Target membrane</keyword>
<keyword id="KW-0800">Toxin</keyword>
<proteinExistence type="evidence at protein level"/>
<protein>
    <recommendedName>
        <fullName evidence="4">M-oxotoxin-Ot1b</fullName>
        <shortName evidence="4">M-OXTX-Ot1b</shortName>
    </recommendedName>
    <alternativeName>
        <fullName evidence="3">Oxyopinin-1b</fullName>
    </alternativeName>
</protein>
<sequence length="48" mass="5203">FRGLAKLLKIGLKSFARVLKKVLPKAAKAGKALAKSLADENAIRQQNQ</sequence>
<evidence type="ECO:0000250" key="1">
    <source>
        <dbReference type="UniProtKB" id="P83247"/>
    </source>
</evidence>
<evidence type="ECO:0000269" key="2">
    <source ref="1"/>
</evidence>
<evidence type="ECO:0000303" key="3">
    <source ref="1"/>
</evidence>
<evidence type="ECO:0000305" key="4"/>
<reference evidence="4" key="1">
    <citation type="submission" date="2018-09" db="UniProtKB">
        <authorList>
            <person name="Vassilevski A."/>
            <person name="Grishin E."/>
        </authorList>
    </citation>
    <scope>PROTEIN SEQUENCE</scope>
    <scope>SUBCELLULAR LOCATION</scope>
    <scope>MASS SPECTROMETRY</scope>
    <source>
        <tissue evidence="2">Venom</tissue>
    </source>
</reference>
<comment type="function">
    <text evidence="1">Disrupts cell membranes, particularly those rich in phosphocholine, through formation of pores. Has antimicrobial activity, hemolytic activity and insecticidal activity.</text>
</comment>
<comment type="subcellular location">
    <subcellularLocation>
        <location evidence="2">Secreted</location>
    </subcellularLocation>
    <subcellularLocation>
        <location evidence="1">Target cell membrane</location>
    </subcellularLocation>
    <text evidence="1">Forms a transmembrane alpha-helix in the target cell membrane. Forms a membrane channel in the prey.</text>
</comment>
<comment type="mass spectrometry" mass="5203.1" error="0.5" method="MALDI" evidence="2"/>
<comment type="similarity">
    <text evidence="4">Belongs to the cationic peptide 02 (oxyopinin-2) family.</text>
</comment>
<feature type="chain" id="PRO_0000446061" description="M-oxotoxin-Ot1b" evidence="2">
    <location>
        <begin position="1"/>
        <end position="48"/>
    </location>
</feature>